<accession>Q6BRF0</accession>
<accession>B5RTJ5</accession>
<comment type="function">
    <text evidence="2">ATP-dependent DNA helicase involved in DNA damage repair by homologous recombination and in genome maintenance. Capable of unwinding D-loops. Plays a role in limiting crossover recombinants during mitotic DNA double-strand break (DSB) repair. Component of a FANCM-MHF complex which promotes gene conversion at blocked replication forks, probably by reversal of the stalled fork.</text>
</comment>
<comment type="catalytic activity">
    <reaction evidence="2">
        <text>ATP + H2O = ADP + phosphate + H(+)</text>
        <dbReference type="Rhea" id="RHEA:13065"/>
        <dbReference type="ChEBI" id="CHEBI:15377"/>
        <dbReference type="ChEBI" id="CHEBI:15378"/>
        <dbReference type="ChEBI" id="CHEBI:30616"/>
        <dbReference type="ChEBI" id="CHEBI:43474"/>
        <dbReference type="ChEBI" id="CHEBI:456216"/>
        <dbReference type="EC" id="3.6.4.12"/>
    </reaction>
</comment>
<comment type="subunit">
    <text evidence="2">Interacts with the MHF histone-fold complex to form the FANCM-MHF complex.</text>
</comment>
<comment type="subcellular location">
    <subcellularLocation>
        <location evidence="1">Nucleus</location>
    </subcellularLocation>
</comment>
<comment type="similarity">
    <text evidence="6">Belongs to the DEAD box helicase family. DEAH subfamily. FANCM sub-subfamily.</text>
</comment>
<name>MPH1_DEBHA</name>
<gene>
    <name evidence="1" type="primary">MPH1</name>
    <name type="ordered locus">DEHA2D16896g</name>
</gene>
<feature type="chain" id="PRO_0000333374" description="ATP-dependent DNA helicase MPH1">
    <location>
        <begin position="1"/>
        <end position="1105"/>
    </location>
</feature>
<feature type="domain" description="Helicase ATP-binding" evidence="3">
    <location>
        <begin position="94"/>
        <end position="261"/>
    </location>
</feature>
<feature type="domain" description="Helicase C-terminal" evidence="4">
    <location>
        <begin position="468"/>
        <end position="641"/>
    </location>
</feature>
<feature type="region of interest" description="Disordered" evidence="5">
    <location>
        <begin position="493"/>
        <end position="534"/>
    </location>
</feature>
<feature type="region of interest" description="Disordered" evidence="5">
    <location>
        <begin position="684"/>
        <end position="708"/>
    </location>
</feature>
<feature type="region of interest" description="Disordered" evidence="5">
    <location>
        <begin position="758"/>
        <end position="824"/>
    </location>
</feature>
<feature type="region of interest" description="Disordered" evidence="5">
    <location>
        <begin position="850"/>
        <end position="880"/>
    </location>
</feature>
<feature type="region of interest" description="Disordered" evidence="5">
    <location>
        <begin position="918"/>
        <end position="953"/>
    </location>
</feature>
<feature type="short sequence motif" description="DEAH box" evidence="3">
    <location>
        <begin position="209"/>
        <end position="212"/>
    </location>
</feature>
<feature type="compositionally biased region" description="Basic residues" evidence="5">
    <location>
        <begin position="499"/>
        <end position="511"/>
    </location>
</feature>
<feature type="compositionally biased region" description="Basic and acidic residues" evidence="5">
    <location>
        <begin position="518"/>
        <end position="532"/>
    </location>
</feature>
<feature type="compositionally biased region" description="Basic residues" evidence="5">
    <location>
        <begin position="684"/>
        <end position="705"/>
    </location>
</feature>
<feature type="compositionally biased region" description="Basic and acidic residues" evidence="5">
    <location>
        <begin position="764"/>
        <end position="787"/>
    </location>
</feature>
<feature type="compositionally biased region" description="Low complexity" evidence="5">
    <location>
        <begin position="788"/>
        <end position="799"/>
    </location>
</feature>
<feature type="compositionally biased region" description="Polar residues" evidence="5">
    <location>
        <begin position="927"/>
        <end position="943"/>
    </location>
</feature>
<feature type="compositionally biased region" description="Acidic residues" evidence="5">
    <location>
        <begin position="944"/>
        <end position="953"/>
    </location>
</feature>
<feature type="binding site" evidence="3">
    <location>
        <begin position="107"/>
        <end position="114"/>
    </location>
    <ligand>
        <name>ATP</name>
        <dbReference type="ChEBI" id="CHEBI:30616"/>
    </ligand>
</feature>
<keyword id="KW-0067">ATP-binding</keyword>
<keyword id="KW-0227">DNA damage</keyword>
<keyword id="KW-0234">DNA repair</keyword>
<keyword id="KW-0238">DNA-binding</keyword>
<keyword id="KW-0347">Helicase</keyword>
<keyword id="KW-0378">Hydrolase</keyword>
<keyword id="KW-0547">Nucleotide-binding</keyword>
<keyword id="KW-0539">Nucleus</keyword>
<keyword id="KW-1185">Reference proteome</keyword>
<organism>
    <name type="scientific">Debaryomyces hansenii (strain ATCC 36239 / CBS 767 / BCRC 21394 / JCM 1990 / NBRC 0083 / IGC 2968)</name>
    <name type="common">Yeast</name>
    <name type="synonym">Torulaspora hansenii</name>
    <dbReference type="NCBI Taxonomy" id="284592"/>
    <lineage>
        <taxon>Eukaryota</taxon>
        <taxon>Fungi</taxon>
        <taxon>Dikarya</taxon>
        <taxon>Ascomycota</taxon>
        <taxon>Saccharomycotina</taxon>
        <taxon>Pichiomycetes</taxon>
        <taxon>Debaryomycetaceae</taxon>
        <taxon>Debaryomyces</taxon>
    </lineage>
</organism>
<sequence length="1105" mass="125395">MNSDDDSVFNDDLNDSEITNLIHNIPSSSSSCSSSKNKLQRNLYGEIIPEQYVEIDSSKGYTELPPTHHALNYENLSSYIYPTNFEVRDYQFNIVQRAFYDNLLVALPTGLGKTFIASTVMLNFTRWFPRGKIIFMAPTKPLVAQQIKACCGITGIPTSEVAILLDKSRRNRADIWDSKTVFFTTPQVVENDLTAGIIDPKEVVLLVIDEAHKSKGNYAYNNVVKFITRFNISFRILALTATPASDVEGVQEIIDNLSISKVEVRTEQSIDITKYMKQKKIERVTVSPSVEICELVDMLCTAIQPVLSMANERRIYDMSDPSKINAFQVIDASQRLLKNPTIPEGLKWQNYFILQILNVVGQALRRLNIYGIKSFYNYFDQKHKEFTIKFKNKKSNNQTAARFYFHDNIKLILDKCKELIADDNFLGHPKLEILINELDEFFKENEANDSRVIIFTEFRESALDIVSSIERIGSNLRPHIFIGQSKEKEKFDEEAYLSKGKKGRTKGKATKGKQNSETPERSTSRTSSEDAQIKGMNQKLQKDLIKKFKKGEYNILVATSIGEEGLDIGEVDLIVCYDSTSSPIKNIQRMGRTGRKRDGKVLLLFAGNEESKFDKAMAGYEFIQQHIMNGRLITLAQSNRIIPKSYKPIVEKKFIEIPEENTEIKAEEDEDEIIRIATSYMNNKGKKVTKSKSKSKSNSKSKKIEKRFFMPDNVTTGFQNVTSMVRKADSDKSVADKRREKDLLDKLLDSDTEDELLIQSKKSPVKENQSKRPNSEHICEEDSRQETENNSNESNGSFENENDQNKESGVSYPLSYRQTPPKLGIRRLSPQVSMNINLDAPVATEEAAPLVTGKSTSPPENVAEKRNSPILNSSNRECAPKQKTLGLKRRKANSITDQLKRHYSRVIKPNTAYRTITVSDDEKSVEDSINNQQLHKNKNLGSTSDDDDAFDEGDVFDDGMDDELALIANDKLSSFERSLSPNLPAQNNASDEVYKHEFSPGEGVLNQEQMLELYTSYFSLLDPADRVDFYDPLNFNQKPNTSINHRGRIGHSQVSRRLLQSSKFIGSVSTTTAKNIVKRYAQTYNTTNHQHNMHIVQEITNSSSK</sequence>
<reference key="1">
    <citation type="journal article" date="2004" name="Nature">
        <title>Genome evolution in yeasts.</title>
        <authorList>
            <person name="Dujon B."/>
            <person name="Sherman D."/>
            <person name="Fischer G."/>
            <person name="Durrens P."/>
            <person name="Casaregola S."/>
            <person name="Lafontaine I."/>
            <person name="de Montigny J."/>
            <person name="Marck C."/>
            <person name="Neuveglise C."/>
            <person name="Talla E."/>
            <person name="Goffard N."/>
            <person name="Frangeul L."/>
            <person name="Aigle M."/>
            <person name="Anthouard V."/>
            <person name="Babour A."/>
            <person name="Barbe V."/>
            <person name="Barnay S."/>
            <person name="Blanchin S."/>
            <person name="Beckerich J.-M."/>
            <person name="Beyne E."/>
            <person name="Bleykasten C."/>
            <person name="Boisrame A."/>
            <person name="Boyer J."/>
            <person name="Cattolico L."/>
            <person name="Confanioleri F."/>
            <person name="de Daruvar A."/>
            <person name="Despons L."/>
            <person name="Fabre E."/>
            <person name="Fairhead C."/>
            <person name="Ferry-Dumazet H."/>
            <person name="Groppi A."/>
            <person name="Hantraye F."/>
            <person name="Hennequin C."/>
            <person name="Jauniaux N."/>
            <person name="Joyet P."/>
            <person name="Kachouri R."/>
            <person name="Kerrest A."/>
            <person name="Koszul R."/>
            <person name="Lemaire M."/>
            <person name="Lesur I."/>
            <person name="Ma L."/>
            <person name="Muller H."/>
            <person name="Nicaud J.-M."/>
            <person name="Nikolski M."/>
            <person name="Oztas S."/>
            <person name="Ozier-Kalogeropoulos O."/>
            <person name="Pellenz S."/>
            <person name="Potier S."/>
            <person name="Richard G.-F."/>
            <person name="Straub M.-L."/>
            <person name="Suleau A."/>
            <person name="Swennen D."/>
            <person name="Tekaia F."/>
            <person name="Wesolowski-Louvel M."/>
            <person name="Westhof E."/>
            <person name="Wirth B."/>
            <person name="Zeniou-Meyer M."/>
            <person name="Zivanovic Y."/>
            <person name="Bolotin-Fukuhara M."/>
            <person name="Thierry A."/>
            <person name="Bouchier C."/>
            <person name="Caudron B."/>
            <person name="Scarpelli C."/>
            <person name="Gaillardin C."/>
            <person name="Weissenbach J."/>
            <person name="Wincker P."/>
            <person name="Souciet J.-L."/>
        </authorList>
    </citation>
    <scope>NUCLEOTIDE SEQUENCE [LARGE SCALE GENOMIC DNA]</scope>
    <source>
        <strain>ATCC 36239 / CBS 767 / BCRC 21394 / JCM 1990 / NBRC 0083 / IGC 2968</strain>
    </source>
</reference>
<proteinExistence type="inferred from homology"/>
<evidence type="ECO:0000250" key="1">
    <source>
        <dbReference type="UniProtKB" id="P40562"/>
    </source>
</evidence>
<evidence type="ECO:0000250" key="2">
    <source>
        <dbReference type="UniProtKB" id="Q9UT23"/>
    </source>
</evidence>
<evidence type="ECO:0000255" key="3">
    <source>
        <dbReference type="PROSITE-ProRule" id="PRU00541"/>
    </source>
</evidence>
<evidence type="ECO:0000255" key="4">
    <source>
        <dbReference type="PROSITE-ProRule" id="PRU00542"/>
    </source>
</evidence>
<evidence type="ECO:0000256" key="5">
    <source>
        <dbReference type="SAM" id="MobiDB-lite"/>
    </source>
</evidence>
<evidence type="ECO:0000305" key="6"/>
<protein>
    <recommendedName>
        <fullName evidence="1">ATP-dependent DNA helicase MPH1</fullName>
        <ecNumber evidence="1 2">3.6.4.12</ecNumber>
    </recommendedName>
    <alternativeName>
        <fullName evidence="2">FANCM-like protein 1</fullName>
    </alternativeName>
</protein>
<dbReference type="EC" id="3.6.4.12" evidence="1 2"/>
<dbReference type="EMBL" id="CR382136">
    <property type="protein sequence ID" value="CAR65680.1"/>
    <property type="molecule type" value="Genomic_DNA"/>
</dbReference>
<dbReference type="RefSeq" id="XP_002770326.1">
    <property type="nucleotide sequence ID" value="XM_002770280.1"/>
</dbReference>
<dbReference type="SMR" id="Q6BRF0"/>
<dbReference type="FunCoup" id="Q6BRF0">
    <property type="interactions" value="255"/>
</dbReference>
<dbReference type="STRING" id="284592.Q6BRF0"/>
<dbReference type="GeneID" id="8998603"/>
<dbReference type="KEGG" id="dha:DEHA2D16896g"/>
<dbReference type="VEuPathDB" id="FungiDB:DEHA2D16896g"/>
<dbReference type="eggNOG" id="KOG0354">
    <property type="taxonomic scope" value="Eukaryota"/>
</dbReference>
<dbReference type="HOGENOM" id="CLU_002513_1_0_1"/>
<dbReference type="InParanoid" id="Q6BRF0"/>
<dbReference type="OMA" id="EGLKWQN"/>
<dbReference type="OrthoDB" id="164902at2759"/>
<dbReference type="Proteomes" id="UP000000599">
    <property type="component" value="Chromosome D"/>
</dbReference>
<dbReference type="GO" id="GO:0005634">
    <property type="term" value="C:nucleus"/>
    <property type="evidence" value="ECO:0007669"/>
    <property type="project" value="UniProtKB-SubCell"/>
</dbReference>
<dbReference type="GO" id="GO:0043138">
    <property type="term" value="F:3'-5' DNA helicase activity"/>
    <property type="evidence" value="ECO:0007669"/>
    <property type="project" value="InterPro"/>
</dbReference>
<dbReference type="GO" id="GO:0005524">
    <property type="term" value="F:ATP binding"/>
    <property type="evidence" value="ECO:0007669"/>
    <property type="project" value="UniProtKB-KW"/>
</dbReference>
<dbReference type="GO" id="GO:0016887">
    <property type="term" value="F:ATP hydrolysis activity"/>
    <property type="evidence" value="ECO:0007669"/>
    <property type="project" value="RHEA"/>
</dbReference>
<dbReference type="GO" id="GO:0000400">
    <property type="term" value="F:four-way junction DNA binding"/>
    <property type="evidence" value="ECO:0007669"/>
    <property type="project" value="TreeGrafter"/>
</dbReference>
<dbReference type="GO" id="GO:0009378">
    <property type="term" value="F:four-way junction helicase activity"/>
    <property type="evidence" value="ECO:0007669"/>
    <property type="project" value="TreeGrafter"/>
</dbReference>
<dbReference type="GO" id="GO:0045003">
    <property type="term" value="P:double-strand break repair via synthesis-dependent strand annealing"/>
    <property type="evidence" value="ECO:0007669"/>
    <property type="project" value="TreeGrafter"/>
</dbReference>
<dbReference type="GO" id="GO:0036297">
    <property type="term" value="P:interstrand cross-link repair"/>
    <property type="evidence" value="ECO:0007669"/>
    <property type="project" value="TreeGrafter"/>
</dbReference>
<dbReference type="CDD" id="cd18033">
    <property type="entry name" value="DEXDc_FANCM"/>
    <property type="match status" value="1"/>
</dbReference>
<dbReference type="CDD" id="cd12091">
    <property type="entry name" value="FANCM_ID"/>
    <property type="match status" value="1"/>
</dbReference>
<dbReference type="FunFam" id="3.40.50.300:FF:000861">
    <property type="entry name" value="Fanconi anemia, complementation group M"/>
    <property type="match status" value="1"/>
</dbReference>
<dbReference type="Gene3D" id="3.40.50.300">
    <property type="entry name" value="P-loop containing nucleotide triphosphate hydrolases"/>
    <property type="match status" value="2"/>
</dbReference>
<dbReference type="InterPro" id="IPR039686">
    <property type="entry name" value="FANCM/Mph1-like_ID"/>
</dbReference>
<dbReference type="InterPro" id="IPR044749">
    <property type="entry name" value="FANCM_DEXDc"/>
</dbReference>
<dbReference type="InterPro" id="IPR006935">
    <property type="entry name" value="Helicase/UvrB_N"/>
</dbReference>
<dbReference type="InterPro" id="IPR014001">
    <property type="entry name" value="Helicase_ATP-bd"/>
</dbReference>
<dbReference type="InterPro" id="IPR001650">
    <property type="entry name" value="Helicase_C-like"/>
</dbReference>
<dbReference type="InterPro" id="IPR027417">
    <property type="entry name" value="P-loop_NTPase"/>
</dbReference>
<dbReference type="PANTHER" id="PTHR14025">
    <property type="entry name" value="FANCONI ANEMIA GROUP M FANCM FAMILY MEMBER"/>
    <property type="match status" value="1"/>
</dbReference>
<dbReference type="PANTHER" id="PTHR14025:SF20">
    <property type="entry name" value="FANCONI ANEMIA GROUP M PROTEIN"/>
    <property type="match status" value="1"/>
</dbReference>
<dbReference type="Pfam" id="PF00271">
    <property type="entry name" value="Helicase_C"/>
    <property type="match status" value="1"/>
</dbReference>
<dbReference type="Pfam" id="PF04851">
    <property type="entry name" value="ResIII"/>
    <property type="match status" value="1"/>
</dbReference>
<dbReference type="SMART" id="SM00487">
    <property type="entry name" value="DEXDc"/>
    <property type="match status" value="1"/>
</dbReference>
<dbReference type="SMART" id="SM00490">
    <property type="entry name" value="HELICc"/>
    <property type="match status" value="1"/>
</dbReference>
<dbReference type="SUPFAM" id="SSF52540">
    <property type="entry name" value="P-loop containing nucleoside triphosphate hydrolases"/>
    <property type="match status" value="1"/>
</dbReference>
<dbReference type="PROSITE" id="PS51192">
    <property type="entry name" value="HELICASE_ATP_BIND_1"/>
    <property type="match status" value="1"/>
</dbReference>
<dbReference type="PROSITE" id="PS51194">
    <property type="entry name" value="HELICASE_CTER"/>
    <property type="match status" value="1"/>
</dbReference>